<proteinExistence type="inferred from homology"/>
<keyword id="KW-0028">Amino-acid biosynthesis</keyword>
<keyword id="KW-0057">Aromatic amino acid biosynthesis</keyword>
<keyword id="KW-0067">ATP-binding</keyword>
<keyword id="KW-0963">Cytoplasm</keyword>
<keyword id="KW-0418">Kinase</keyword>
<keyword id="KW-0460">Magnesium</keyword>
<keyword id="KW-0479">Metal-binding</keyword>
<keyword id="KW-0547">Nucleotide-binding</keyword>
<keyword id="KW-0808">Transferase</keyword>
<evidence type="ECO:0000255" key="1">
    <source>
        <dbReference type="HAMAP-Rule" id="MF_01269"/>
    </source>
</evidence>
<gene>
    <name evidence="1" type="primary">aroL</name>
    <name type="ordered locus">Spro_1018</name>
</gene>
<accession>A8GAI2</accession>
<sequence>MTQTIFMVGARGAGKTTVGSALALALGYQFIDTDLFMQQTTQMSVAEMVEQEGWLGFRRRESIALQTVTQPSTVVATGGGAILAEENRRFMRQHGKVIYLRSPAEVLAQRLEEYPQDTQRPTLTGRPIAEEMLEVLAAREALYQEAAHYVMDGTGGPQQVVEQILSALQLETVK</sequence>
<protein>
    <recommendedName>
        <fullName evidence="1">Shikimate kinase 2</fullName>
        <shortName evidence="1">SK 2</shortName>
        <ecNumber evidence="1">2.7.1.71</ecNumber>
    </recommendedName>
</protein>
<name>AROL_SERP5</name>
<feature type="chain" id="PRO_1000067334" description="Shikimate kinase 2">
    <location>
        <begin position="1"/>
        <end position="174"/>
    </location>
</feature>
<feature type="region of interest" description="LID domain">
    <location>
        <begin position="112"/>
        <end position="126"/>
    </location>
</feature>
<feature type="binding site" evidence="1">
    <location>
        <begin position="12"/>
        <end position="17"/>
    </location>
    <ligand>
        <name>ATP</name>
        <dbReference type="ChEBI" id="CHEBI:30616"/>
    </ligand>
</feature>
<feature type="binding site" evidence="1">
    <location>
        <position position="16"/>
    </location>
    <ligand>
        <name>Mg(2+)</name>
        <dbReference type="ChEBI" id="CHEBI:18420"/>
    </ligand>
</feature>
<feature type="binding site" evidence="1">
    <location>
        <position position="32"/>
    </location>
    <ligand>
        <name>Mg(2+)</name>
        <dbReference type="ChEBI" id="CHEBI:18420"/>
    </ligand>
</feature>
<feature type="binding site" evidence="1">
    <location>
        <position position="34"/>
    </location>
    <ligand>
        <name>substrate</name>
    </ligand>
</feature>
<feature type="binding site" evidence="1">
    <location>
        <position position="58"/>
    </location>
    <ligand>
        <name>substrate</name>
    </ligand>
</feature>
<feature type="binding site" evidence="1">
    <location>
        <position position="79"/>
    </location>
    <ligand>
        <name>substrate</name>
    </ligand>
</feature>
<feature type="binding site" evidence="1">
    <location>
        <position position="120"/>
    </location>
    <ligand>
        <name>ATP</name>
        <dbReference type="ChEBI" id="CHEBI:30616"/>
    </ligand>
</feature>
<feature type="binding site" evidence="1">
    <location>
        <position position="139"/>
    </location>
    <ligand>
        <name>substrate</name>
    </ligand>
</feature>
<organism>
    <name type="scientific">Serratia proteamaculans (strain 568)</name>
    <dbReference type="NCBI Taxonomy" id="399741"/>
    <lineage>
        <taxon>Bacteria</taxon>
        <taxon>Pseudomonadati</taxon>
        <taxon>Pseudomonadota</taxon>
        <taxon>Gammaproteobacteria</taxon>
        <taxon>Enterobacterales</taxon>
        <taxon>Yersiniaceae</taxon>
        <taxon>Serratia</taxon>
    </lineage>
</organism>
<reference key="1">
    <citation type="submission" date="2007-09" db="EMBL/GenBank/DDBJ databases">
        <title>Complete sequence of chromosome of Serratia proteamaculans 568.</title>
        <authorList>
            <consortium name="US DOE Joint Genome Institute"/>
            <person name="Copeland A."/>
            <person name="Lucas S."/>
            <person name="Lapidus A."/>
            <person name="Barry K."/>
            <person name="Glavina del Rio T."/>
            <person name="Dalin E."/>
            <person name="Tice H."/>
            <person name="Pitluck S."/>
            <person name="Chain P."/>
            <person name="Malfatti S."/>
            <person name="Shin M."/>
            <person name="Vergez L."/>
            <person name="Schmutz J."/>
            <person name="Larimer F."/>
            <person name="Land M."/>
            <person name="Hauser L."/>
            <person name="Kyrpides N."/>
            <person name="Kim E."/>
            <person name="Taghavi S."/>
            <person name="Newman L."/>
            <person name="Vangronsveld J."/>
            <person name="van der Lelie D."/>
            <person name="Richardson P."/>
        </authorList>
    </citation>
    <scope>NUCLEOTIDE SEQUENCE [LARGE SCALE GENOMIC DNA]</scope>
    <source>
        <strain>568</strain>
    </source>
</reference>
<dbReference type="EC" id="2.7.1.71" evidence="1"/>
<dbReference type="EMBL" id="CP000826">
    <property type="protein sequence ID" value="ABV40122.1"/>
    <property type="molecule type" value="Genomic_DNA"/>
</dbReference>
<dbReference type="SMR" id="A8GAI2"/>
<dbReference type="STRING" id="399741.Spro_1018"/>
<dbReference type="KEGG" id="spe:Spro_1018"/>
<dbReference type="eggNOG" id="COG0703">
    <property type="taxonomic scope" value="Bacteria"/>
</dbReference>
<dbReference type="HOGENOM" id="CLU_057607_4_3_6"/>
<dbReference type="OrthoDB" id="9800332at2"/>
<dbReference type="UniPathway" id="UPA00053">
    <property type="reaction ID" value="UER00088"/>
</dbReference>
<dbReference type="GO" id="GO:0005829">
    <property type="term" value="C:cytosol"/>
    <property type="evidence" value="ECO:0007669"/>
    <property type="project" value="TreeGrafter"/>
</dbReference>
<dbReference type="GO" id="GO:0005524">
    <property type="term" value="F:ATP binding"/>
    <property type="evidence" value="ECO:0007669"/>
    <property type="project" value="UniProtKB-UniRule"/>
</dbReference>
<dbReference type="GO" id="GO:0000287">
    <property type="term" value="F:magnesium ion binding"/>
    <property type="evidence" value="ECO:0007669"/>
    <property type="project" value="UniProtKB-UniRule"/>
</dbReference>
<dbReference type="GO" id="GO:0004765">
    <property type="term" value="F:shikimate kinase activity"/>
    <property type="evidence" value="ECO:0007669"/>
    <property type="project" value="UniProtKB-UniRule"/>
</dbReference>
<dbReference type="GO" id="GO:0008652">
    <property type="term" value="P:amino acid biosynthetic process"/>
    <property type="evidence" value="ECO:0007669"/>
    <property type="project" value="UniProtKB-KW"/>
</dbReference>
<dbReference type="GO" id="GO:0009073">
    <property type="term" value="P:aromatic amino acid family biosynthetic process"/>
    <property type="evidence" value="ECO:0007669"/>
    <property type="project" value="UniProtKB-KW"/>
</dbReference>
<dbReference type="GO" id="GO:0009423">
    <property type="term" value="P:chorismate biosynthetic process"/>
    <property type="evidence" value="ECO:0007669"/>
    <property type="project" value="UniProtKB-UniRule"/>
</dbReference>
<dbReference type="CDD" id="cd00464">
    <property type="entry name" value="SK"/>
    <property type="match status" value="1"/>
</dbReference>
<dbReference type="Gene3D" id="3.40.50.300">
    <property type="entry name" value="P-loop containing nucleotide triphosphate hydrolases"/>
    <property type="match status" value="1"/>
</dbReference>
<dbReference type="HAMAP" id="MF_00109">
    <property type="entry name" value="Shikimate_kinase"/>
    <property type="match status" value="1"/>
</dbReference>
<dbReference type="HAMAP" id="MF_01269">
    <property type="entry name" value="Shikimate_kinase_2"/>
    <property type="match status" value="1"/>
</dbReference>
<dbReference type="InterPro" id="IPR027417">
    <property type="entry name" value="P-loop_NTPase"/>
</dbReference>
<dbReference type="InterPro" id="IPR031322">
    <property type="entry name" value="Shikimate/glucono_kinase"/>
</dbReference>
<dbReference type="InterPro" id="IPR000623">
    <property type="entry name" value="Shikimate_kinase/TSH1"/>
</dbReference>
<dbReference type="InterPro" id="IPR027544">
    <property type="entry name" value="Shikimate_kinase_2"/>
</dbReference>
<dbReference type="InterPro" id="IPR023000">
    <property type="entry name" value="Shikimate_kinase_CS"/>
</dbReference>
<dbReference type="NCBIfam" id="NF002988">
    <property type="entry name" value="PRK03731.1"/>
    <property type="match status" value="1"/>
</dbReference>
<dbReference type="PANTHER" id="PTHR21087">
    <property type="entry name" value="SHIKIMATE KINASE"/>
    <property type="match status" value="1"/>
</dbReference>
<dbReference type="PANTHER" id="PTHR21087:SF21">
    <property type="entry name" value="SHIKIMATE KINASE 2"/>
    <property type="match status" value="1"/>
</dbReference>
<dbReference type="Pfam" id="PF01202">
    <property type="entry name" value="SKI"/>
    <property type="match status" value="1"/>
</dbReference>
<dbReference type="PRINTS" id="PR01100">
    <property type="entry name" value="SHIKIMTKNASE"/>
</dbReference>
<dbReference type="SUPFAM" id="SSF52540">
    <property type="entry name" value="P-loop containing nucleoside triphosphate hydrolases"/>
    <property type="match status" value="1"/>
</dbReference>
<dbReference type="PROSITE" id="PS01128">
    <property type="entry name" value="SHIKIMATE_KINASE"/>
    <property type="match status" value="1"/>
</dbReference>
<comment type="function">
    <text evidence="1">Catalyzes the specific phosphorylation of the 3-hydroxyl group of shikimic acid using ATP as a cosubstrate.</text>
</comment>
<comment type="catalytic activity">
    <reaction evidence="1">
        <text>shikimate + ATP = 3-phosphoshikimate + ADP + H(+)</text>
        <dbReference type="Rhea" id="RHEA:13121"/>
        <dbReference type="ChEBI" id="CHEBI:15378"/>
        <dbReference type="ChEBI" id="CHEBI:30616"/>
        <dbReference type="ChEBI" id="CHEBI:36208"/>
        <dbReference type="ChEBI" id="CHEBI:145989"/>
        <dbReference type="ChEBI" id="CHEBI:456216"/>
        <dbReference type="EC" id="2.7.1.71"/>
    </reaction>
</comment>
<comment type="cofactor">
    <cofactor evidence="1">
        <name>Mg(2+)</name>
        <dbReference type="ChEBI" id="CHEBI:18420"/>
    </cofactor>
    <text evidence="1">Binds 1 Mg(2+) ion per subunit.</text>
</comment>
<comment type="pathway">
    <text evidence="1">Metabolic intermediate biosynthesis; chorismate biosynthesis; chorismate from D-erythrose 4-phosphate and phosphoenolpyruvate: step 5/7.</text>
</comment>
<comment type="subunit">
    <text evidence="1">Monomer.</text>
</comment>
<comment type="subcellular location">
    <subcellularLocation>
        <location evidence="1">Cytoplasm</location>
    </subcellularLocation>
</comment>
<comment type="domain">
    <text evidence="1">The LID domain closes over the active site upon ATP binding.</text>
</comment>
<comment type="similarity">
    <text evidence="1">Belongs to the shikimate kinase family. AroL subfamily.</text>
</comment>